<accession>Q92GX2</accession>
<keyword id="KW-0687">Ribonucleoprotein</keyword>
<keyword id="KW-0689">Ribosomal protein</keyword>
<keyword id="KW-0694">RNA-binding</keyword>
<keyword id="KW-0699">rRNA-binding</keyword>
<dbReference type="EMBL" id="AE006914">
    <property type="protein sequence ID" value="AAL03538.1"/>
    <property type="molecule type" value="Genomic_DNA"/>
</dbReference>
<dbReference type="PIR" id="H97824">
    <property type="entry name" value="H97824"/>
</dbReference>
<dbReference type="RefSeq" id="WP_010977584.1">
    <property type="nucleotide sequence ID" value="NC_003103.1"/>
</dbReference>
<dbReference type="SMR" id="Q92GX2"/>
<dbReference type="GeneID" id="928142"/>
<dbReference type="KEGG" id="rco:RC1000"/>
<dbReference type="HOGENOM" id="CLU_058591_0_2_5"/>
<dbReference type="Proteomes" id="UP000000816">
    <property type="component" value="Chromosome"/>
</dbReference>
<dbReference type="GO" id="GO:0022627">
    <property type="term" value="C:cytosolic small ribosomal subunit"/>
    <property type="evidence" value="ECO:0007669"/>
    <property type="project" value="TreeGrafter"/>
</dbReference>
<dbReference type="GO" id="GO:0003729">
    <property type="term" value="F:mRNA binding"/>
    <property type="evidence" value="ECO:0007669"/>
    <property type="project" value="UniProtKB-UniRule"/>
</dbReference>
<dbReference type="GO" id="GO:0019843">
    <property type="term" value="F:rRNA binding"/>
    <property type="evidence" value="ECO:0007669"/>
    <property type="project" value="UniProtKB-UniRule"/>
</dbReference>
<dbReference type="GO" id="GO:0003735">
    <property type="term" value="F:structural constituent of ribosome"/>
    <property type="evidence" value="ECO:0007669"/>
    <property type="project" value="InterPro"/>
</dbReference>
<dbReference type="GO" id="GO:0006412">
    <property type="term" value="P:translation"/>
    <property type="evidence" value="ECO:0007669"/>
    <property type="project" value="UniProtKB-UniRule"/>
</dbReference>
<dbReference type="CDD" id="cd02412">
    <property type="entry name" value="KH-II_30S_S3"/>
    <property type="match status" value="1"/>
</dbReference>
<dbReference type="FunFam" id="3.30.300.20:FF:000001">
    <property type="entry name" value="30S ribosomal protein S3"/>
    <property type="match status" value="1"/>
</dbReference>
<dbReference type="Gene3D" id="3.30.300.20">
    <property type="match status" value="1"/>
</dbReference>
<dbReference type="Gene3D" id="3.30.1140.32">
    <property type="entry name" value="Ribosomal protein S3, C-terminal domain"/>
    <property type="match status" value="1"/>
</dbReference>
<dbReference type="HAMAP" id="MF_01309_B">
    <property type="entry name" value="Ribosomal_uS3_B"/>
    <property type="match status" value="1"/>
</dbReference>
<dbReference type="InterPro" id="IPR004087">
    <property type="entry name" value="KH_dom"/>
</dbReference>
<dbReference type="InterPro" id="IPR015946">
    <property type="entry name" value="KH_dom-like_a/b"/>
</dbReference>
<dbReference type="InterPro" id="IPR004044">
    <property type="entry name" value="KH_dom_type_2"/>
</dbReference>
<dbReference type="InterPro" id="IPR009019">
    <property type="entry name" value="KH_sf_prok-type"/>
</dbReference>
<dbReference type="InterPro" id="IPR036419">
    <property type="entry name" value="Ribosomal_S3_C_sf"/>
</dbReference>
<dbReference type="InterPro" id="IPR005704">
    <property type="entry name" value="Ribosomal_uS3_bac-typ"/>
</dbReference>
<dbReference type="InterPro" id="IPR001351">
    <property type="entry name" value="Ribosomal_uS3_C"/>
</dbReference>
<dbReference type="InterPro" id="IPR018280">
    <property type="entry name" value="Ribosomal_uS3_CS"/>
</dbReference>
<dbReference type="NCBIfam" id="TIGR01009">
    <property type="entry name" value="rpsC_bact"/>
    <property type="match status" value="1"/>
</dbReference>
<dbReference type="PANTHER" id="PTHR11760">
    <property type="entry name" value="30S/40S RIBOSOMAL PROTEIN S3"/>
    <property type="match status" value="1"/>
</dbReference>
<dbReference type="PANTHER" id="PTHR11760:SF19">
    <property type="entry name" value="SMALL RIBOSOMAL SUBUNIT PROTEIN US3C"/>
    <property type="match status" value="1"/>
</dbReference>
<dbReference type="Pfam" id="PF07650">
    <property type="entry name" value="KH_2"/>
    <property type="match status" value="1"/>
</dbReference>
<dbReference type="Pfam" id="PF00189">
    <property type="entry name" value="Ribosomal_S3_C"/>
    <property type="match status" value="1"/>
</dbReference>
<dbReference type="SMART" id="SM00322">
    <property type="entry name" value="KH"/>
    <property type="match status" value="1"/>
</dbReference>
<dbReference type="SUPFAM" id="SSF54814">
    <property type="entry name" value="Prokaryotic type KH domain (KH-domain type II)"/>
    <property type="match status" value="1"/>
</dbReference>
<dbReference type="SUPFAM" id="SSF54821">
    <property type="entry name" value="Ribosomal protein S3 C-terminal domain"/>
    <property type="match status" value="1"/>
</dbReference>
<dbReference type="PROSITE" id="PS50823">
    <property type="entry name" value="KH_TYPE_2"/>
    <property type="match status" value="1"/>
</dbReference>
<dbReference type="PROSITE" id="PS00548">
    <property type="entry name" value="RIBOSOMAL_S3"/>
    <property type="match status" value="1"/>
</dbReference>
<reference key="1">
    <citation type="journal article" date="2001" name="Science">
        <title>Mechanisms of evolution in Rickettsia conorii and R. prowazekii.</title>
        <authorList>
            <person name="Ogata H."/>
            <person name="Audic S."/>
            <person name="Renesto-Audiffren P."/>
            <person name="Fournier P.-E."/>
            <person name="Barbe V."/>
            <person name="Samson D."/>
            <person name="Roux V."/>
            <person name="Cossart P."/>
            <person name="Weissenbach J."/>
            <person name="Claverie J.-M."/>
            <person name="Raoult D."/>
        </authorList>
    </citation>
    <scope>NUCLEOTIDE SEQUENCE [LARGE SCALE GENOMIC DNA]</scope>
    <source>
        <strain>ATCC VR-613 / Malish 7</strain>
    </source>
</reference>
<protein>
    <recommendedName>
        <fullName evidence="1">Small ribosomal subunit protein uS3</fullName>
    </recommendedName>
    <alternativeName>
        <fullName evidence="2">30S ribosomal protein S3</fullName>
    </alternativeName>
</protein>
<feature type="chain" id="PRO_0000130186" description="Small ribosomal subunit protein uS3">
    <location>
        <begin position="1"/>
        <end position="217"/>
    </location>
</feature>
<feature type="domain" description="KH type-2" evidence="1">
    <location>
        <begin position="40"/>
        <end position="110"/>
    </location>
</feature>
<organism>
    <name type="scientific">Rickettsia conorii (strain ATCC VR-613 / Malish 7)</name>
    <dbReference type="NCBI Taxonomy" id="272944"/>
    <lineage>
        <taxon>Bacteria</taxon>
        <taxon>Pseudomonadati</taxon>
        <taxon>Pseudomonadota</taxon>
        <taxon>Alphaproteobacteria</taxon>
        <taxon>Rickettsiales</taxon>
        <taxon>Rickettsiaceae</taxon>
        <taxon>Rickettsieae</taxon>
        <taxon>Rickettsia</taxon>
        <taxon>spotted fever group</taxon>
    </lineage>
</organism>
<evidence type="ECO:0000255" key="1">
    <source>
        <dbReference type="HAMAP-Rule" id="MF_01309"/>
    </source>
</evidence>
<evidence type="ECO:0000305" key="2"/>
<name>RS3_RICCN</name>
<gene>
    <name evidence="1" type="primary">rpsC</name>
    <name type="ordered locus">RC1000</name>
</gene>
<sequence>MGQKVCAHGFRVGPTLIKGWDSILYAEKHYKTLFIQDLKIRDLINKGFNQAQISRVLIERPSNKSIIININAKKPNIIIGRNGSEIDKLKKAIEKMTSLKEVYINIHEVRKFNIDAAIVAQTIALQLEKRVSFRKAMKTAIQASFKQGGQGIRVSCSGRLGGAEIARTEWYIEGRMPLHTLRADIDYSTAEAITTYGVIGVKVWIYKGEYTENKRYN</sequence>
<comment type="function">
    <text evidence="1">Binds the lower part of the 30S subunit head. Binds mRNA in the 70S ribosome, positioning it for translation.</text>
</comment>
<comment type="subunit">
    <text evidence="1">Part of the 30S ribosomal subunit. Forms a tight complex with proteins S10 and S14.</text>
</comment>
<comment type="similarity">
    <text evidence="1">Belongs to the universal ribosomal protein uS3 family.</text>
</comment>
<proteinExistence type="inferred from homology"/>